<sequence>MIFEIIKIGSQPINFAYPIPLLSLLAFMLSGSGYNELIISYIFAFSFFTAANLWNHLNDAEDDLNAGRNYARFLIEHRKIVTEFVVAFYFVSFLLIFFISKSKEIALLLTGLSVVLTWLYSDKIFIGKIIRRFKEDYKTEVFTYILCSFSFPLSFWTIFSEISQVGVVFTLATGFTYLSGFFLKDLKDISADIKSGYRTLAVVLSPSTLLIISVMLFIASTFVVIFSSLLDVTPTSSLLVLTVYPPILFAIYKFHKEKWKITKNIISSLKIYTYSYLGFLIAFAIGCKL</sequence>
<comment type="subcellular location">
    <subcellularLocation>
        <location evidence="2">Cell membrane</location>
        <topology evidence="2">Multi-pass membrane protein</topology>
    </subcellularLocation>
</comment>
<protein>
    <recommendedName>
        <fullName>Uncharacterized protein AF_0771</fullName>
    </recommendedName>
</protein>
<feature type="chain" id="PRO_0000127922" description="Uncharacterized protein AF_0771">
    <location>
        <begin position="1"/>
        <end position="289"/>
    </location>
</feature>
<feature type="transmembrane region" description="Helical" evidence="1">
    <location>
        <begin position="13"/>
        <end position="32"/>
    </location>
</feature>
<feature type="transmembrane region" description="Helical" evidence="1">
    <location>
        <begin position="37"/>
        <end position="59"/>
    </location>
</feature>
<feature type="transmembrane region" description="Helical" evidence="1">
    <location>
        <begin position="80"/>
        <end position="99"/>
    </location>
</feature>
<feature type="transmembrane region" description="Helical" evidence="1">
    <location>
        <begin position="104"/>
        <end position="121"/>
    </location>
</feature>
<feature type="transmembrane region" description="Helical" evidence="1">
    <location>
        <begin position="141"/>
        <end position="160"/>
    </location>
</feature>
<feature type="transmembrane region" description="Helical" evidence="1">
    <location>
        <begin position="165"/>
        <end position="183"/>
    </location>
</feature>
<feature type="transmembrane region" description="Helical" evidence="1">
    <location>
        <begin position="203"/>
        <end position="225"/>
    </location>
</feature>
<feature type="transmembrane region" description="Helical" evidence="1">
    <location>
        <begin position="235"/>
        <end position="252"/>
    </location>
</feature>
<feature type="transmembrane region" description="Helical" evidence="1">
    <location>
        <begin position="265"/>
        <end position="287"/>
    </location>
</feature>
<keyword id="KW-1003">Cell membrane</keyword>
<keyword id="KW-0472">Membrane</keyword>
<keyword id="KW-1185">Reference proteome</keyword>
<keyword id="KW-0812">Transmembrane</keyword>
<keyword id="KW-1133">Transmembrane helix</keyword>
<evidence type="ECO:0000255" key="1"/>
<evidence type="ECO:0000305" key="2"/>
<organism>
    <name type="scientific">Archaeoglobus fulgidus (strain ATCC 49558 / DSM 4304 / JCM 9628 / NBRC 100126 / VC-16)</name>
    <dbReference type="NCBI Taxonomy" id="224325"/>
    <lineage>
        <taxon>Archaea</taxon>
        <taxon>Methanobacteriati</taxon>
        <taxon>Methanobacteriota</taxon>
        <taxon>Archaeoglobi</taxon>
        <taxon>Archaeoglobales</taxon>
        <taxon>Archaeoglobaceae</taxon>
        <taxon>Archaeoglobus</taxon>
    </lineage>
</organism>
<accession>O29487</accession>
<name>Y771_ARCFU</name>
<proteinExistence type="predicted"/>
<gene>
    <name type="ordered locus">AF_0771</name>
</gene>
<reference key="1">
    <citation type="journal article" date="1997" name="Nature">
        <title>The complete genome sequence of the hyperthermophilic, sulphate-reducing archaeon Archaeoglobus fulgidus.</title>
        <authorList>
            <person name="Klenk H.-P."/>
            <person name="Clayton R.A."/>
            <person name="Tomb J.-F."/>
            <person name="White O."/>
            <person name="Nelson K.E."/>
            <person name="Ketchum K.A."/>
            <person name="Dodson R.J."/>
            <person name="Gwinn M.L."/>
            <person name="Hickey E.K."/>
            <person name="Peterson J.D."/>
            <person name="Richardson D.L."/>
            <person name="Kerlavage A.R."/>
            <person name="Graham D.E."/>
            <person name="Kyrpides N.C."/>
            <person name="Fleischmann R.D."/>
            <person name="Quackenbush J."/>
            <person name="Lee N.H."/>
            <person name="Sutton G.G."/>
            <person name="Gill S.R."/>
            <person name="Kirkness E.F."/>
            <person name="Dougherty B.A."/>
            <person name="McKenney K."/>
            <person name="Adams M.D."/>
            <person name="Loftus B.J."/>
            <person name="Peterson S.N."/>
            <person name="Reich C.I."/>
            <person name="McNeil L.K."/>
            <person name="Badger J.H."/>
            <person name="Glodek A."/>
            <person name="Zhou L."/>
            <person name="Overbeek R."/>
            <person name="Gocayne J.D."/>
            <person name="Weidman J.F."/>
            <person name="McDonald L.A."/>
            <person name="Utterback T.R."/>
            <person name="Cotton M.D."/>
            <person name="Spriggs T."/>
            <person name="Artiach P."/>
            <person name="Kaine B.P."/>
            <person name="Sykes S.M."/>
            <person name="Sadow P.W."/>
            <person name="D'Andrea K.P."/>
            <person name="Bowman C."/>
            <person name="Fujii C."/>
            <person name="Garland S.A."/>
            <person name="Mason T.M."/>
            <person name="Olsen G.J."/>
            <person name="Fraser C.M."/>
            <person name="Smith H.O."/>
            <person name="Woese C.R."/>
            <person name="Venter J.C."/>
        </authorList>
    </citation>
    <scope>NUCLEOTIDE SEQUENCE [LARGE SCALE GENOMIC DNA]</scope>
    <source>
        <strain>ATCC 49558 / DSM 4304 / JCM 9628 / NBRC 100126 / VC-16</strain>
    </source>
</reference>
<dbReference type="EMBL" id="AE000782">
    <property type="protein sequence ID" value="AAB90477.1"/>
    <property type="molecule type" value="Genomic_DNA"/>
</dbReference>
<dbReference type="PIR" id="C69346">
    <property type="entry name" value="C69346"/>
</dbReference>
<dbReference type="RefSeq" id="WP_010878274.1">
    <property type="nucleotide sequence ID" value="NC_000917.1"/>
</dbReference>
<dbReference type="SMR" id="O29487"/>
<dbReference type="STRING" id="224325.AF_0771"/>
<dbReference type="PaxDb" id="224325-AF_0771"/>
<dbReference type="DNASU" id="1483988"/>
<dbReference type="EnsemblBacteria" id="AAB90477">
    <property type="protein sequence ID" value="AAB90477"/>
    <property type="gene ID" value="AF_0771"/>
</dbReference>
<dbReference type="KEGG" id="afu:AF_0771"/>
<dbReference type="eggNOG" id="arCOG00476">
    <property type="taxonomic scope" value="Archaea"/>
</dbReference>
<dbReference type="HOGENOM" id="CLU_968394_0_0_2"/>
<dbReference type="OrthoDB" id="293340at2157"/>
<dbReference type="BRENDA" id="7.2.2.14">
    <property type="organism ID" value="414"/>
</dbReference>
<dbReference type="Proteomes" id="UP000002199">
    <property type="component" value="Chromosome"/>
</dbReference>
<dbReference type="GO" id="GO:0005886">
    <property type="term" value="C:plasma membrane"/>
    <property type="evidence" value="ECO:0007669"/>
    <property type="project" value="UniProtKB-SubCell"/>
</dbReference>
<dbReference type="GO" id="GO:0016765">
    <property type="term" value="F:transferase activity, transferring alkyl or aryl (other than methyl) groups"/>
    <property type="evidence" value="ECO:0007669"/>
    <property type="project" value="InterPro"/>
</dbReference>
<dbReference type="InterPro" id="IPR000537">
    <property type="entry name" value="UbiA_prenyltransferase"/>
</dbReference>
<dbReference type="Pfam" id="PF01040">
    <property type="entry name" value="UbiA"/>
    <property type="match status" value="1"/>
</dbReference>